<reference key="1">
    <citation type="submission" date="2006-03" db="EMBL/GenBank/DDBJ databases">
        <title>Complete sequence of Rhodopseudomonas palustris BisB18.</title>
        <authorList>
            <consortium name="US DOE Joint Genome Institute"/>
            <person name="Copeland A."/>
            <person name="Lucas S."/>
            <person name="Lapidus A."/>
            <person name="Barry K."/>
            <person name="Detter J.C."/>
            <person name="Glavina del Rio T."/>
            <person name="Hammon N."/>
            <person name="Israni S."/>
            <person name="Dalin E."/>
            <person name="Tice H."/>
            <person name="Pitluck S."/>
            <person name="Chain P."/>
            <person name="Malfatti S."/>
            <person name="Shin M."/>
            <person name="Vergez L."/>
            <person name="Schmutz J."/>
            <person name="Larimer F."/>
            <person name="Land M."/>
            <person name="Hauser L."/>
            <person name="Pelletier D.A."/>
            <person name="Kyrpides N."/>
            <person name="Anderson I."/>
            <person name="Oda Y."/>
            <person name="Harwood C.S."/>
            <person name="Richardson P."/>
        </authorList>
    </citation>
    <scope>NUCLEOTIDE SEQUENCE [LARGE SCALE GENOMIC DNA]</scope>
    <source>
        <strain>BisB18</strain>
    </source>
</reference>
<feature type="chain" id="PRO_0000289774" description="sn-glycerol-3-phosphate import ATP-binding protein UgpC">
    <location>
        <begin position="1"/>
        <end position="366"/>
    </location>
</feature>
<feature type="domain" description="ABC transporter" evidence="1">
    <location>
        <begin position="4"/>
        <end position="235"/>
    </location>
</feature>
<feature type="binding site" evidence="1">
    <location>
        <begin position="37"/>
        <end position="44"/>
    </location>
    <ligand>
        <name>ATP</name>
        <dbReference type="ChEBI" id="CHEBI:30616"/>
    </ligand>
</feature>
<evidence type="ECO:0000255" key="1">
    <source>
        <dbReference type="HAMAP-Rule" id="MF_01727"/>
    </source>
</evidence>
<name>UGPC_RHOPB</name>
<accession>Q21CA3</accession>
<organism>
    <name type="scientific">Rhodopseudomonas palustris (strain BisB18)</name>
    <dbReference type="NCBI Taxonomy" id="316056"/>
    <lineage>
        <taxon>Bacteria</taxon>
        <taxon>Pseudomonadati</taxon>
        <taxon>Pseudomonadota</taxon>
        <taxon>Alphaproteobacteria</taxon>
        <taxon>Hyphomicrobiales</taxon>
        <taxon>Nitrobacteraceae</taxon>
        <taxon>Rhodopseudomonas</taxon>
    </lineage>
</organism>
<proteinExistence type="inferred from homology"/>
<sequence>MANVTLRNVRKTYPGGVEAIKGIDFAVGDGQFCVLVGPSGCGKSTLLRMVAGLETITKGEIDIGGRVVNDIEPADRDIAMVFQNYALYPHMSVYNNMAYGLRNRGMPKPEIDSRVREAARILEIGALLERKPKQLSGGQRQRVAMGRAIVRQPKVFLFDEPLSNLDAKLRIAMRVEIRKLQRRLNTTSIYVTHDQLEAMTLADILVVMNGGVVEQIGNPLEIYRKPASTFVASFIGAPPMNLIALEPDEIRAQFAGDVRANTEAGILGIRPEDLLISTEAAASGGLALELVVDAIERVGAETFVYGARSRHGEPVISAKPGELPPGEVIVRVPGQSAPAAGERIMVTAPREKLHLFSADGRRRIDL</sequence>
<comment type="function">
    <text evidence="1">Part of the ABC transporter complex UgpBAEC involved in sn-glycerol-3-phosphate (G3P) import. Responsible for energy coupling to the transport system.</text>
</comment>
<comment type="catalytic activity">
    <reaction evidence="1">
        <text>sn-glycerol 3-phosphate(out) + ATP + H2O = sn-glycerol 3-phosphate(in) + ADP + phosphate + H(+)</text>
        <dbReference type="Rhea" id="RHEA:21668"/>
        <dbReference type="ChEBI" id="CHEBI:15377"/>
        <dbReference type="ChEBI" id="CHEBI:15378"/>
        <dbReference type="ChEBI" id="CHEBI:30616"/>
        <dbReference type="ChEBI" id="CHEBI:43474"/>
        <dbReference type="ChEBI" id="CHEBI:57597"/>
        <dbReference type="ChEBI" id="CHEBI:456216"/>
        <dbReference type="EC" id="7.6.2.10"/>
    </reaction>
</comment>
<comment type="subunit">
    <text evidence="1">The complex is composed of two ATP-binding proteins (UgpC), two transmembrane proteins (UgpA and UgpE) and a solute-binding protein (UgpB).</text>
</comment>
<comment type="subcellular location">
    <subcellularLocation>
        <location evidence="1">Cell inner membrane</location>
        <topology evidence="1">Peripheral membrane protein</topology>
    </subcellularLocation>
</comment>
<comment type="similarity">
    <text evidence="1">Belongs to the ABC transporter superfamily. sn-glycerol-3-phosphate importer (TC 3.A.1.1.3) family.</text>
</comment>
<keyword id="KW-0067">ATP-binding</keyword>
<keyword id="KW-0997">Cell inner membrane</keyword>
<keyword id="KW-1003">Cell membrane</keyword>
<keyword id="KW-0472">Membrane</keyword>
<keyword id="KW-0547">Nucleotide-binding</keyword>
<keyword id="KW-0762">Sugar transport</keyword>
<keyword id="KW-1278">Translocase</keyword>
<keyword id="KW-0813">Transport</keyword>
<dbReference type="EC" id="7.6.2.10" evidence="1"/>
<dbReference type="EMBL" id="CP000301">
    <property type="protein sequence ID" value="ABD85983.1"/>
    <property type="molecule type" value="Genomic_DNA"/>
</dbReference>
<dbReference type="SMR" id="Q21CA3"/>
<dbReference type="STRING" id="316056.RPC_0408"/>
<dbReference type="KEGG" id="rpc:RPC_0408"/>
<dbReference type="eggNOG" id="COG3842">
    <property type="taxonomic scope" value="Bacteria"/>
</dbReference>
<dbReference type="HOGENOM" id="CLU_000604_1_1_5"/>
<dbReference type="OrthoDB" id="8134152at2"/>
<dbReference type="GO" id="GO:0055052">
    <property type="term" value="C:ATP-binding cassette (ABC) transporter complex, substrate-binding subunit-containing"/>
    <property type="evidence" value="ECO:0007669"/>
    <property type="project" value="TreeGrafter"/>
</dbReference>
<dbReference type="GO" id="GO:0015430">
    <property type="term" value="F:ABC-type glycerol-3-phosphate transporter activity"/>
    <property type="evidence" value="ECO:0007669"/>
    <property type="project" value="UniProtKB-EC"/>
</dbReference>
<dbReference type="GO" id="GO:0005524">
    <property type="term" value="F:ATP binding"/>
    <property type="evidence" value="ECO:0007669"/>
    <property type="project" value="UniProtKB-KW"/>
</dbReference>
<dbReference type="GO" id="GO:0016887">
    <property type="term" value="F:ATP hydrolysis activity"/>
    <property type="evidence" value="ECO:0007669"/>
    <property type="project" value="InterPro"/>
</dbReference>
<dbReference type="GO" id="GO:0008643">
    <property type="term" value="P:carbohydrate transport"/>
    <property type="evidence" value="ECO:0007669"/>
    <property type="project" value="InterPro"/>
</dbReference>
<dbReference type="GO" id="GO:0001407">
    <property type="term" value="P:glycerophosphodiester transmembrane transport"/>
    <property type="evidence" value="ECO:0007669"/>
    <property type="project" value="TreeGrafter"/>
</dbReference>
<dbReference type="CDD" id="cd03301">
    <property type="entry name" value="ABC_MalK_N"/>
    <property type="match status" value="1"/>
</dbReference>
<dbReference type="FunFam" id="3.40.50.300:FF:000042">
    <property type="entry name" value="Maltose/maltodextrin ABC transporter, ATP-binding protein"/>
    <property type="match status" value="1"/>
</dbReference>
<dbReference type="Gene3D" id="2.40.50.100">
    <property type="match status" value="1"/>
</dbReference>
<dbReference type="Gene3D" id="2.40.50.140">
    <property type="entry name" value="Nucleic acid-binding proteins"/>
    <property type="match status" value="1"/>
</dbReference>
<dbReference type="Gene3D" id="3.40.50.300">
    <property type="entry name" value="P-loop containing nucleotide triphosphate hydrolases"/>
    <property type="match status" value="1"/>
</dbReference>
<dbReference type="InterPro" id="IPR003593">
    <property type="entry name" value="AAA+_ATPase"/>
</dbReference>
<dbReference type="InterPro" id="IPR003439">
    <property type="entry name" value="ABC_transporter-like_ATP-bd"/>
</dbReference>
<dbReference type="InterPro" id="IPR017871">
    <property type="entry name" value="ABC_transporter-like_CS"/>
</dbReference>
<dbReference type="InterPro" id="IPR015855">
    <property type="entry name" value="ABC_transpr_MalK-like"/>
</dbReference>
<dbReference type="InterPro" id="IPR047641">
    <property type="entry name" value="ABC_transpr_MalK/UgpC-like"/>
</dbReference>
<dbReference type="InterPro" id="IPR008995">
    <property type="entry name" value="Mo/tungstate-bd_C_term_dom"/>
</dbReference>
<dbReference type="InterPro" id="IPR012340">
    <property type="entry name" value="NA-bd_OB-fold"/>
</dbReference>
<dbReference type="InterPro" id="IPR027417">
    <property type="entry name" value="P-loop_NTPase"/>
</dbReference>
<dbReference type="NCBIfam" id="NF008653">
    <property type="entry name" value="PRK11650.1"/>
    <property type="match status" value="1"/>
</dbReference>
<dbReference type="PANTHER" id="PTHR43875">
    <property type="entry name" value="MALTODEXTRIN IMPORT ATP-BINDING PROTEIN MSMX"/>
    <property type="match status" value="1"/>
</dbReference>
<dbReference type="PANTHER" id="PTHR43875:SF12">
    <property type="entry name" value="SN-GLYCEROL-3-PHOSPHATE IMPORT ATP-BINDING PROTEIN UGPC"/>
    <property type="match status" value="1"/>
</dbReference>
<dbReference type="Pfam" id="PF00005">
    <property type="entry name" value="ABC_tran"/>
    <property type="match status" value="1"/>
</dbReference>
<dbReference type="SMART" id="SM00382">
    <property type="entry name" value="AAA"/>
    <property type="match status" value="1"/>
</dbReference>
<dbReference type="SUPFAM" id="SSF50331">
    <property type="entry name" value="MOP-like"/>
    <property type="match status" value="1"/>
</dbReference>
<dbReference type="SUPFAM" id="SSF52540">
    <property type="entry name" value="P-loop containing nucleoside triphosphate hydrolases"/>
    <property type="match status" value="1"/>
</dbReference>
<dbReference type="PROSITE" id="PS00211">
    <property type="entry name" value="ABC_TRANSPORTER_1"/>
    <property type="match status" value="1"/>
</dbReference>
<dbReference type="PROSITE" id="PS50893">
    <property type="entry name" value="ABC_TRANSPORTER_2"/>
    <property type="match status" value="1"/>
</dbReference>
<dbReference type="PROSITE" id="PS51315">
    <property type="entry name" value="UGPC"/>
    <property type="match status" value="1"/>
</dbReference>
<protein>
    <recommendedName>
        <fullName evidence="1">sn-glycerol-3-phosphate import ATP-binding protein UgpC</fullName>
        <ecNumber evidence="1">7.6.2.10</ecNumber>
    </recommendedName>
</protein>
<gene>
    <name evidence="1" type="primary">ugpC</name>
    <name type="ordered locus">RPC_0408</name>
</gene>